<sequence length="138" mass="15618">MRTLWIMAVLLVGVEGSLVELGKMILQETGKNPVTSYGAYGCNCGVLGRGKPKDATDRCCYVHKCCYKKLTDCNPKKDRYSYSWKDKTIVCGENNSCLKELCECDKAVAICLRENLDTYNKKYKNNYLKPFCKKADPC</sequence>
<protein>
    <recommendedName>
        <fullName evidence="7 9">Basic phospholipase A2 homolog MjTX-I</fullName>
    </recommendedName>
    <alternativeName>
        <fullName>Basic phospholipase A2 homolog 1</fullName>
        <shortName>svPLA2 homolog</shortName>
    </alternativeName>
    <alternativeName>
        <fullName evidence="8">Basic phospholipase A2 homolog BomoTx</fullName>
    </alternativeName>
    <alternativeName>
        <fullName evidence="6">Myotoxin I</fullName>
    </alternativeName>
</protein>
<reference key="1">
    <citation type="journal article" date="2017" name="Proc. Natl. Acad. Sci. U.S.A.">
        <title>Lys49 myotoxin from the Brazilian lancehead pit viper elicits pain through regulated ATP release.</title>
        <authorList>
            <person name="Zhang C."/>
            <person name="Medzihradszky K.F."/>
            <person name="Sanchez E.E."/>
            <person name="Basbaum A.I."/>
            <person name="Julius D."/>
        </authorList>
    </citation>
    <scope>NUCLEOTIDE SEQUENCE [MRNA]</scope>
    <scope>FUNCTION</scope>
    <scope>SUBCELLULAR LOCATION</scope>
    <scope>MASS SPECTROMETRY</scope>
    <source>
        <tissue>Venom</tissue>
        <tissue>Venom gland</tissue>
    </source>
</reference>
<reference key="2">
    <citation type="journal article" date="2000" name="Arch. Biochem. Biophys.">
        <title>Structural and functional characterization of myotoxin I, a Lys49 phospholipase A2 homolog from Bothrops moojeni (Caissaca) snake venom.</title>
        <authorList>
            <person name="Soares A.M."/>
            <person name="Andriao-Escarso S.H."/>
            <person name="Augulo Y."/>
            <person name="Lomonte B."/>
            <person name="Gutierrez J.M."/>
            <person name="Marangoni S."/>
            <person name="Toyama M.H."/>
            <person name="Arni R.K."/>
            <person name="Giglio J.R."/>
        </authorList>
    </citation>
    <scope>PROTEIN SEQUENCE OF 17-138</scope>
    <scope>FUNCTION</scope>
    <scope>SUBUNIT</scope>
    <scope>SUBCELLULAR LOCATION</scope>
    <scope>TOXIC DOSE</scope>
    <source>
        <tissue>Venom</tissue>
    </source>
</reference>
<reference key="3">
    <citation type="journal article" date="2005" name="Acta Crystallogr. F">
        <title>Crystallization and preliminary X-ray diffraction analysis of myotoxin I, a Lys49-phospholipase A2 from Bothrops moojeni.</title>
        <authorList>
            <person name="Marchi-Salvador D.P."/>
            <person name="Silveira L.B."/>
            <person name="Soares A.M."/>
            <person name="Fontes M.R."/>
        </authorList>
    </citation>
    <scope>CRYSTALLIZATION</scope>
    <scope>SUBUNIT</scope>
</reference>
<reference evidence="14" key="4">
    <citation type="journal article" date="2013" name="PLoS ONE">
        <title>Structural and phylogenetic studies with MjTX-I reveal a multi-oligomeric toxin--a novel feature in Lys49-PLA2s protein class.</title>
        <authorList>
            <person name="Salvador G.H.M."/>
            <person name="Fernandes C.A."/>
            <person name="Magro A.J."/>
            <person name="Marchi-Salvador D.P."/>
            <person name="Cavalcante W.L.G."/>
            <person name="Fernandez R.M."/>
            <person name="Gallacci M."/>
            <person name="Soares A.M."/>
            <person name="Oliveira C.L."/>
            <person name="Fontes M.R.M."/>
        </authorList>
    </citation>
    <scope>X-RAY CRYSTALLOGRAPHY (2.49 ANGSTROMS) OF 17-138</scope>
    <scope>FUNCTION</scope>
    <scope>SUBUNIT</scope>
    <scope>DISULFIDE BONDS</scope>
    <source>
        <tissue>Venom</tissue>
    </source>
</reference>
<reference evidence="15" key="5">
    <citation type="journal article" date="2018" name="Sci. Rep.">
        <title>Structural and functional characterization of suramin-bound MjTX-I from Bothrops moojeni suggests a particular myotoxic mechanism.</title>
        <authorList>
            <person name="Salvador G.H.M."/>
            <person name="Dreyer T.R."/>
            <person name="Gomes A.A.S."/>
            <person name="Cavalcante W.L.G."/>
            <person name="Dos Santos J.I."/>
            <person name="Gandin C.A."/>
            <person name="de Oliveira Neto M."/>
            <person name="Gallacci M."/>
            <person name="Fontes M.R.M."/>
        </authorList>
    </citation>
    <scope>X-RAY CRYSTALLOGRAPHY (2.15 ANGSTROMS) OF 17-138 IN COMPLEX WITH SURAMIN</scope>
    <scope>ACTIVITY REGULATION</scope>
    <scope>DISULFIDE BOND</scope>
</reference>
<reference evidence="16" key="6">
    <citation type="journal article" date="2021" name="Biochim. Biophys. Acta">
        <title>The synthetic varespladib molecule is a multi-functional inhibitor for PLA2 and PLA2-like ophidic toxins.</title>
        <authorList>
            <person name="Salvador G.H.M."/>
            <person name="Borges R.J."/>
            <person name="Lomonte B."/>
            <person name="Lewin M.R."/>
            <person name="Fontes M.R.M."/>
        </authorList>
    </citation>
    <scope>X-RAY CRYSTALLOGRAPHY (1.76 ANGSTROMS) OF 17-138 IN COMPLEX WITH PLA2 INHIBITOR VARESPLADIB</scope>
    <scope>SEQUENCE REVISION TO 35; 83; 94; 116; 117; 124; 126; 135; 137</scope>
    <scope>PARTIAL PROTEIN SEQUENCE</scope>
    <scope>FUNCTION</scope>
    <scope>BIOASSAY</scope>
    <scope>SUBCELLULAR LOCATION</scope>
    <scope>DISULFIDE BOND</scope>
    <source>
        <tissue>Venom</tissue>
    </source>
</reference>
<organism>
    <name type="scientific">Bothrops moojeni</name>
    <name type="common">Lance-headed viper</name>
    <name type="synonym">Caissaca</name>
    <dbReference type="NCBI Taxonomy" id="98334"/>
    <lineage>
        <taxon>Eukaryota</taxon>
        <taxon>Metazoa</taxon>
        <taxon>Chordata</taxon>
        <taxon>Craniata</taxon>
        <taxon>Vertebrata</taxon>
        <taxon>Euteleostomi</taxon>
        <taxon>Lepidosauria</taxon>
        <taxon>Squamata</taxon>
        <taxon>Bifurcata</taxon>
        <taxon>Unidentata</taxon>
        <taxon>Episquamata</taxon>
        <taxon>Toxicofera</taxon>
        <taxon>Serpentes</taxon>
        <taxon>Colubroidea</taxon>
        <taxon>Viperidae</taxon>
        <taxon>Crotalinae</taxon>
        <taxon>Bothrops</taxon>
    </lineage>
</organism>
<evidence type="ECO:0000269" key="1">
    <source>
    </source>
</evidence>
<evidence type="ECO:0000269" key="2">
    <source>
    </source>
</evidence>
<evidence type="ECO:0000269" key="3">
    <source>
    </source>
</evidence>
<evidence type="ECO:0000269" key="4">
    <source>
    </source>
</evidence>
<evidence type="ECO:0000269" key="5">
    <source>
    </source>
</evidence>
<evidence type="ECO:0000303" key="6">
    <source>
    </source>
</evidence>
<evidence type="ECO:0000303" key="7">
    <source>
    </source>
</evidence>
<evidence type="ECO:0000303" key="8">
    <source>
    </source>
</evidence>
<evidence type="ECO:0000303" key="9">
    <source>
    </source>
</evidence>
<evidence type="ECO:0000305" key="10"/>
<evidence type="ECO:0000305" key="11">
    <source>
    </source>
</evidence>
<evidence type="ECO:0000305" key="12">
    <source>
    </source>
</evidence>
<evidence type="ECO:0000305" key="13">
    <source>
    </source>
</evidence>
<evidence type="ECO:0000312" key="14">
    <source>
        <dbReference type="PDB" id="3T0R"/>
    </source>
</evidence>
<evidence type="ECO:0000312" key="15">
    <source>
        <dbReference type="PDB" id="6CE2"/>
    </source>
</evidence>
<evidence type="ECO:0000312" key="16">
    <source>
        <dbReference type="PDB" id="7LYE"/>
    </source>
</evidence>
<evidence type="ECO:0007744" key="17">
    <source>
        <dbReference type="PDB" id="3T0R"/>
    </source>
</evidence>
<evidence type="ECO:0007744" key="18">
    <source>
        <dbReference type="PDB" id="6CE2"/>
    </source>
</evidence>
<evidence type="ECO:0007744" key="19">
    <source>
        <dbReference type="PDB" id="7LYE"/>
    </source>
</evidence>
<evidence type="ECO:0007829" key="20">
    <source>
        <dbReference type="PDB" id="3T0R"/>
    </source>
</evidence>
<evidence type="ECO:0007829" key="21">
    <source>
        <dbReference type="PDB" id="7LYE"/>
    </source>
</evidence>
<feature type="signal peptide" evidence="3">
    <location>
        <begin position="1"/>
        <end position="16"/>
    </location>
</feature>
<feature type="chain" id="PRO_0000161623" description="Basic phospholipase A2 homolog MjTX-I" evidence="1">
    <location>
        <begin position="17"/>
        <end position="138"/>
    </location>
</feature>
<feature type="binding site" evidence="4">
    <location>
        <position position="34"/>
    </location>
    <ligand>
        <name>suramin</name>
        <dbReference type="ChEBI" id="CHEBI:180911"/>
        <note>inhibitor</note>
    </ligand>
</feature>
<feature type="binding site" evidence="5">
    <location>
        <position position="43"/>
    </location>
    <ligand>
        <name>varespladib</name>
        <dbReference type="ChEBI" id="CHEBI:189666"/>
        <note>inhibitor</note>
    </ligand>
</feature>
<feature type="binding site" evidence="4">
    <location>
        <position position="45"/>
    </location>
    <ligand>
        <name>suramin</name>
        <dbReference type="ChEBI" id="CHEBI:180911"/>
        <note>inhibitor</note>
    </ligand>
</feature>
<feature type="binding site" evidence="4">
    <location>
        <position position="48"/>
    </location>
    <ligand>
        <name>suramin</name>
        <dbReference type="ChEBI" id="CHEBI:180911"/>
        <note>inhibitor</note>
    </ligand>
</feature>
<feature type="binding site" evidence="5">
    <location>
        <position position="63"/>
    </location>
    <ligand>
        <name>varespladib</name>
        <dbReference type="ChEBI" id="CHEBI:189666"/>
        <note>inhibitor</note>
    </ligand>
</feature>
<feature type="binding site" evidence="5">
    <location>
        <position position="64"/>
    </location>
    <ligand>
        <name>varespladib</name>
        <dbReference type="ChEBI" id="CHEBI:189666"/>
        <note>inhibitor</note>
    </ligand>
</feature>
<feature type="binding site" evidence="4">
    <location>
        <position position="85"/>
    </location>
    <ligand>
        <name>suramin</name>
        <dbReference type="ChEBI" id="CHEBI:180911"/>
        <note>inhibitor</note>
    </ligand>
</feature>
<feature type="site" description="Membrane-docking site (MDoS)" evidence="13">
    <location>
        <position position="49"/>
    </location>
</feature>
<feature type="site" description="Membrane-docking site (MDoS)" evidence="13">
    <location>
        <position position="64"/>
    </location>
</feature>
<feature type="site" description="Membrane-docking site (MDoS)" evidence="13">
    <location>
        <position position="68"/>
    </location>
</feature>
<feature type="site" description="Membrane-docking site (MDoS)" evidence="13">
    <location>
        <position position="76"/>
    </location>
</feature>
<feature type="site" description="Membrane-docking site (MDoS)" evidence="13">
    <location>
        <position position="77"/>
    </location>
</feature>
<feature type="site" description="Membrane-disrupting site (MDiS)" evidence="13">
    <location>
        <position position="128"/>
    </location>
</feature>
<feature type="site" description="Membrane-docking site (MDoS)" evidence="13">
    <location>
        <position position="129"/>
    </location>
</feature>
<feature type="site" description="Membrane-disrupting site (MDiS)" evidence="13">
    <location>
        <position position="131"/>
    </location>
</feature>
<feature type="site" description="Membrane-docking site (MDoS)" evidence="13">
    <location>
        <position position="134"/>
    </location>
</feature>
<feature type="disulfide bond" evidence="2 4 5 17 18 19">
    <location>
        <begin position="42"/>
        <end position="132"/>
    </location>
</feature>
<feature type="disulfide bond" evidence="2 4 5 17 18 19">
    <location>
        <begin position="44"/>
        <end position="60"/>
    </location>
</feature>
<feature type="disulfide bond" evidence="2 4 5 17 18 19">
    <location>
        <begin position="59"/>
        <end position="111"/>
    </location>
</feature>
<feature type="disulfide bond" evidence="2 4 5 17 18 19">
    <location>
        <begin position="65"/>
        <end position="138"/>
    </location>
</feature>
<feature type="disulfide bond" evidence="2 4 5 17 18 19">
    <location>
        <begin position="66"/>
        <end position="104"/>
    </location>
</feature>
<feature type="disulfide bond" evidence="2 4 5 17 18 19">
    <location>
        <begin position="73"/>
        <end position="97"/>
    </location>
</feature>
<feature type="disulfide bond" evidence="2 4 5 17 18 19">
    <location>
        <begin position="91"/>
        <end position="102"/>
    </location>
</feature>
<feature type="sequence conflict" description="In Ref. 2; AA sequence." evidence="10" ref="2">
    <original>V</original>
    <variation>A</variation>
    <location>
        <position position="34"/>
    </location>
</feature>
<feature type="sequence conflict" description="In Ref. 2; AA sequence." evidence="10" ref="2">
    <original>D</original>
    <variation>N</variation>
    <location>
        <position position="72"/>
    </location>
</feature>
<feature type="sequence conflict" description="In Ref. 2; AA sequence." evidence="10" ref="2">
    <original>N</original>
    <variation>D</variation>
    <location>
        <position position="74"/>
    </location>
</feature>
<feature type="sequence conflict" description="In Ref. 2; AA sequence." evidence="10" ref="2">
    <original>D</original>
    <variation>N</variation>
    <location>
        <position position="86"/>
    </location>
</feature>
<feature type="sequence conflict" description="In Ref. 6; AA sequence." evidence="10" ref="6">
    <original>S</original>
    <variation>A</variation>
    <location>
        <position position="96"/>
    </location>
</feature>
<feature type="sequence conflict" description="In Ref. 2; AA sequence." evidence="10" ref="2">
    <original>E</original>
    <variation>Q</variation>
    <location>
        <position position="100"/>
    </location>
</feature>
<feature type="sequence conflict" description="In Ref. 2; AA sequence." evidence="10" ref="2">
    <location>
        <position position="123"/>
    </location>
</feature>
<feature type="sequence conflict" description="In Ref. 2; AA sequence." evidence="10" ref="2">
    <original>N</original>
    <variation>D</variation>
    <location>
        <position position="125"/>
    </location>
</feature>
<feature type="sequence conflict" description="In Ref. 2; AA sequence." evidence="10" ref="2">
    <original>K</original>
    <variation>D</variation>
    <location>
        <position position="133"/>
    </location>
</feature>
<feature type="sequence conflict" description="In Ref. 6; AA sequence." evidence="10" ref="6">
    <original>D</original>
    <variation>L</variation>
    <location>
        <position position="136"/>
    </location>
</feature>
<feature type="helix" evidence="21">
    <location>
        <begin position="18"/>
        <end position="29"/>
    </location>
</feature>
<feature type="helix" evidence="21">
    <location>
        <begin position="33"/>
        <end position="37"/>
    </location>
</feature>
<feature type="turn" evidence="21">
    <location>
        <begin position="41"/>
        <end position="43"/>
    </location>
</feature>
<feature type="strand" evidence="21">
    <location>
        <begin position="46"/>
        <end position="48"/>
    </location>
</feature>
<feature type="helix" evidence="21">
    <location>
        <begin position="55"/>
        <end position="68"/>
    </location>
</feature>
<feature type="turn" evidence="21">
    <location>
        <begin position="75"/>
        <end position="77"/>
    </location>
</feature>
<feature type="strand" evidence="21">
    <location>
        <begin position="82"/>
        <end position="84"/>
    </location>
</feature>
<feature type="strand" evidence="21">
    <location>
        <begin position="86"/>
        <end position="91"/>
    </location>
</feature>
<feature type="helix" evidence="21">
    <location>
        <begin position="96"/>
        <end position="114"/>
    </location>
</feature>
<feature type="helix" evidence="21">
    <location>
        <begin position="116"/>
        <end position="118"/>
    </location>
</feature>
<feature type="helix" evidence="21">
    <location>
        <begin position="121"/>
        <end position="123"/>
    </location>
</feature>
<feature type="strand" evidence="20">
    <location>
        <begin position="125"/>
        <end position="128"/>
    </location>
</feature>
<dbReference type="EMBL" id="KX856005">
    <property type="protein sequence ID" value="AQQ72931.1"/>
    <property type="molecule type" value="mRNA"/>
</dbReference>
<dbReference type="PDB" id="3T0R">
    <property type="method" value="X-ray"/>
    <property type="resolution" value="2.49 A"/>
    <property type="chains" value="A/B/C/D=17-138"/>
</dbReference>
<dbReference type="PDB" id="6CE2">
    <property type="method" value="X-ray"/>
    <property type="resolution" value="2.15 A"/>
    <property type="chains" value="A/B=17-138"/>
</dbReference>
<dbReference type="PDB" id="7LYE">
    <property type="method" value="X-ray"/>
    <property type="resolution" value="1.76 A"/>
    <property type="chains" value="A/B/C/D=17-138"/>
</dbReference>
<dbReference type="PDBsum" id="3T0R"/>
<dbReference type="PDBsum" id="6CE2"/>
<dbReference type="PDBsum" id="7LYE"/>
<dbReference type="SMR" id="P82114"/>
<dbReference type="EvolutionaryTrace" id="P82114"/>
<dbReference type="GO" id="GO:0005576">
    <property type="term" value="C:extracellular region"/>
    <property type="evidence" value="ECO:0007669"/>
    <property type="project" value="UniProtKB-SubCell"/>
</dbReference>
<dbReference type="GO" id="GO:0005509">
    <property type="term" value="F:calcium ion binding"/>
    <property type="evidence" value="ECO:0007669"/>
    <property type="project" value="InterPro"/>
</dbReference>
<dbReference type="GO" id="GO:0047498">
    <property type="term" value="F:calcium-dependent phospholipase A2 activity"/>
    <property type="evidence" value="ECO:0007669"/>
    <property type="project" value="TreeGrafter"/>
</dbReference>
<dbReference type="GO" id="GO:0005543">
    <property type="term" value="F:phospholipid binding"/>
    <property type="evidence" value="ECO:0007669"/>
    <property type="project" value="TreeGrafter"/>
</dbReference>
<dbReference type="GO" id="GO:0090729">
    <property type="term" value="F:toxin activity"/>
    <property type="evidence" value="ECO:0007669"/>
    <property type="project" value="UniProtKB-KW"/>
</dbReference>
<dbReference type="GO" id="GO:0050482">
    <property type="term" value="P:arachidonate secretion"/>
    <property type="evidence" value="ECO:0007669"/>
    <property type="project" value="InterPro"/>
</dbReference>
<dbReference type="GO" id="GO:0016042">
    <property type="term" value="P:lipid catabolic process"/>
    <property type="evidence" value="ECO:0007669"/>
    <property type="project" value="InterPro"/>
</dbReference>
<dbReference type="GO" id="GO:0042130">
    <property type="term" value="P:negative regulation of T cell proliferation"/>
    <property type="evidence" value="ECO:0007669"/>
    <property type="project" value="TreeGrafter"/>
</dbReference>
<dbReference type="GO" id="GO:0006644">
    <property type="term" value="P:phospholipid metabolic process"/>
    <property type="evidence" value="ECO:0007669"/>
    <property type="project" value="InterPro"/>
</dbReference>
<dbReference type="CDD" id="cd00125">
    <property type="entry name" value="PLA2c"/>
    <property type="match status" value="1"/>
</dbReference>
<dbReference type="FunFam" id="1.20.90.10:FF:000001">
    <property type="entry name" value="Basic phospholipase A2 homolog"/>
    <property type="match status" value="1"/>
</dbReference>
<dbReference type="Gene3D" id="1.20.90.10">
    <property type="entry name" value="Phospholipase A2 domain"/>
    <property type="match status" value="1"/>
</dbReference>
<dbReference type="InterPro" id="IPR001211">
    <property type="entry name" value="PLipase_A2"/>
</dbReference>
<dbReference type="InterPro" id="IPR033112">
    <property type="entry name" value="PLipase_A2_Asp_AS"/>
</dbReference>
<dbReference type="InterPro" id="IPR016090">
    <property type="entry name" value="PLipase_A2_dom"/>
</dbReference>
<dbReference type="InterPro" id="IPR036444">
    <property type="entry name" value="PLipase_A2_dom_sf"/>
</dbReference>
<dbReference type="InterPro" id="IPR033113">
    <property type="entry name" value="PLipase_A2_His_AS"/>
</dbReference>
<dbReference type="PANTHER" id="PTHR11716">
    <property type="entry name" value="PHOSPHOLIPASE A2 FAMILY MEMBER"/>
    <property type="match status" value="1"/>
</dbReference>
<dbReference type="PANTHER" id="PTHR11716:SF9">
    <property type="entry name" value="PHOSPHOLIPASE A2, MEMBRANE ASSOCIATED"/>
    <property type="match status" value="1"/>
</dbReference>
<dbReference type="Pfam" id="PF00068">
    <property type="entry name" value="Phospholip_A2_1"/>
    <property type="match status" value="1"/>
</dbReference>
<dbReference type="PRINTS" id="PR00389">
    <property type="entry name" value="PHPHLIPASEA2"/>
</dbReference>
<dbReference type="SMART" id="SM00085">
    <property type="entry name" value="PA2c"/>
    <property type="match status" value="1"/>
</dbReference>
<dbReference type="SUPFAM" id="SSF48619">
    <property type="entry name" value="Phospholipase A2, PLA2"/>
    <property type="match status" value="1"/>
</dbReference>
<dbReference type="PROSITE" id="PS00119">
    <property type="entry name" value="PA2_ASP"/>
    <property type="match status" value="1"/>
</dbReference>
<dbReference type="PROSITE" id="PS00118">
    <property type="entry name" value="PA2_HIS"/>
    <property type="match status" value="1"/>
</dbReference>
<name>PA2H1_BOTMO</name>
<accession>P82114</accession>
<accession>A0A1S5XW05</accession>
<comment type="function">
    <text evidence="1 2 3 5">Snake venom phospholipase A2 homolog that lacks enzymatic activity (PubMed:28265084). In vivo, it displays local myotoxin and edema-inducing activities and is lethal by intraperitoneal injection (PubMed:10620318, PubMed:33865953). The myotoxicity effect is weaker in comparison to other myotoxins, probably due to the formation of high molecular weight complexes and to the oligomeric conformation (conventional dimer) (PubMed:10620318, PubMed:23573271). It shows specificity toward neurons and myotubes, but not on a variety of other cell types (PubMed:10620318, PubMed:28265084). This PLA2 excites a cohort of sensory neurons via ATP release and consequent activation of P2RX2 and/or P2RX3 purinergic receptors (PubMed:28265084). Pannexin hemichannels act as downstream mediators of toxin-evoked ATP release (PubMed:28265084). In vivo, it elicits nonneurogenic inflammatory pain, thermal hyperalgesia, and mechanical allodynia, of which the latter is completely dependent on purinergic signaling (PubMed:28265084).</text>
</comment>
<comment type="activity regulation">
    <text evidence="4 5">Myotoxin activity is inhibited by suramin and varespladib (PubMed:29985425, PubMed:33865953). Inhibition by suramin may be caused by (i) distortion of MDiS from both monomers impairing the membrane disruption mechanism by the toxin and (ii) surface electrostatic changes of the complex that interfere with the toxin membrane dockage process (putative-MDoS is partially hidden) (PubMed:29985425). Inhibition by varespladib is probably through varespladib binding to MDoS (PubMed:33865953).</text>
</comment>
<comment type="subunit">
    <text evidence="1 2 4 12">Monomer in solution (PubMed:29985425). Homodimer; non-covalently linked (probable conventional/extended dimer conformation) (PubMed:10620318, PubMed:23573271). Homotetramer (dimer of homodimer (probable conventional/extended dimer conformation)); non-covalently linked (PubMed:16511185, PubMed:23573271). Homooligomer (PubMed:10620318, PubMed:23573271).</text>
</comment>
<comment type="subcellular location">
    <subcellularLocation>
        <location evidence="1">Secreted</location>
    </subcellularLocation>
</comment>
<comment type="tissue specificity">
    <text evidence="11">Expressed by the venom gland.</text>
</comment>
<comment type="mass spectrometry" mass="13835.0" method="MALDI" evidence="3"/>
<comment type="toxic dose">
    <text evidence="1">LD(50) is 8.5 mg/kg by intraperitoneal injection into mice.</text>
</comment>
<comment type="similarity">
    <text evidence="10">Belongs to the phospholipase A2 family. Group II subfamily. K49 sub-subfamily.</text>
</comment>
<comment type="caution">
    <text evidence="10">Does not bind calcium as one of the calcium-binding sites is lost (Asp-&gt;Lys in position 64, which corresponds to 'Lys-49' in the current nomenclature).</text>
</comment>
<keyword id="KW-0002">3D-structure</keyword>
<keyword id="KW-0903">Direct protein sequencing</keyword>
<keyword id="KW-1015">Disulfide bond</keyword>
<keyword id="KW-0959">Myotoxin</keyword>
<keyword id="KW-0964">Secreted</keyword>
<keyword id="KW-0732">Signal</keyword>
<keyword id="KW-0800">Toxin</keyword>
<proteinExistence type="evidence at protein level"/>